<gene>
    <name type="primary">DGKE</name>
    <name type="synonym">DAGK5</name>
</gene>
<organism>
    <name type="scientific">Homo sapiens</name>
    <name type="common">Human</name>
    <dbReference type="NCBI Taxonomy" id="9606"/>
    <lineage>
        <taxon>Eukaryota</taxon>
        <taxon>Metazoa</taxon>
        <taxon>Chordata</taxon>
        <taxon>Craniata</taxon>
        <taxon>Vertebrata</taxon>
        <taxon>Euteleostomi</taxon>
        <taxon>Mammalia</taxon>
        <taxon>Eutheria</taxon>
        <taxon>Euarchontoglires</taxon>
        <taxon>Primates</taxon>
        <taxon>Haplorrhini</taxon>
        <taxon>Catarrhini</taxon>
        <taxon>Hominidae</taxon>
        <taxon>Homo</taxon>
    </lineage>
</organism>
<evidence type="ECO:0000255" key="1"/>
<evidence type="ECO:0000255" key="2">
    <source>
        <dbReference type="PROSITE-ProRule" id="PRU00226"/>
    </source>
</evidence>
<evidence type="ECO:0000255" key="3">
    <source>
        <dbReference type="PROSITE-ProRule" id="PRU00783"/>
    </source>
</evidence>
<evidence type="ECO:0000269" key="4">
    <source>
    </source>
</evidence>
<evidence type="ECO:0000269" key="5">
    <source>
    </source>
</evidence>
<evidence type="ECO:0000269" key="6">
    <source>
    </source>
</evidence>
<evidence type="ECO:0000269" key="7">
    <source>
    </source>
</evidence>
<evidence type="ECO:0000269" key="8">
    <source>
    </source>
</evidence>
<evidence type="ECO:0000269" key="9">
    <source>
    </source>
</evidence>
<evidence type="ECO:0000269" key="10">
    <source>
    </source>
</evidence>
<evidence type="ECO:0000269" key="11">
    <source>
    </source>
</evidence>
<evidence type="ECO:0000269" key="12">
    <source>
    </source>
</evidence>
<evidence type="ECO:0000303" key="13">
    <source>
    </source>
</evidence>
<evidence type="ECO:0000303" key="14">
    <source>
    </source>
</evidence>
<evidence type="ECO:0000303" key="15">
    <source>
    </source>
</evidence>
<evidence type="ECO:0000305" key="16"/>
<evidence type="ECO:0000305" key="17">
    <source>
    </source>
</evidence>
<evidence type="ECO:0000305" key="18">
    <source>
    </source>
</evidence>
<evidence type="ECO:0000305" key="19">
    <source>
    </source>
</evidence>
<dbReference type="EC" id="2.7.1.107" evidence="4 6 7 8 9 12"/>
<dbReference type="EMBL" id="U49379">
    <property type="protein sequence ID" value="AAC50497.1"/>
    <property type="molecule type" value="mRNA"/>
</dbReference>
<dbReference type="EMBL" id="AC015912">
    <property type="status" value="NOT_ANNOTATED_CDS"/>
    <property type="molecule type" value="Genomic_DNA"/>
</dbReference>
<dbReference type="EMBL" id="AC106858">
    <property type="status" value="NOT_ANNOTATED_CDS"/>
    <property type="molecule type" value="Genomic_DNA"/>
</dbReference>
<dbReference type="EMBL" id="BC022297">
    <property type="protein sequence ID" value="AAH22297.1"/>
    <property type="molecule type" value="mRNA"/>
</dbReference>
<dbReference type="EMBL" id="AF136745">
    <property type="protein sequence ID" value="AAD45666.1"/>
    <property type="molecule type" value="Genomic_DNA"/>
</dbReference>
<dbReference type="CCDS" id="CCDS11590.1">
    <molecule id="P52429-1"/>
</dbReference>
<dbReference type="RefSeq" id="NP_003638.1">
    <molecule id="P52429-1"/>
    <property type="nucleotide sequence ID" value="NM_003647.3"/>
</dbReference>
<dbReference type="SMR" id="P52429"/>
<dbReference type="BioGRID" id="114096">
    <property type="interactions" value="80"/>
</dbReference>
<dbReference type="FunCoup" id="P52429">
    <property type="interactions" value="3592"/>
</dbReference>
<dbReference type="IntAct" id="P52429">
    <property type="interactions" value="33"/>
</dbReference>
<dbReference type="STRING" id="9606.ENSP00000284061"/>
<dbReference type="ChEMBL" id="CHEMBL1075187"/>
<dbReference type="DrugBank" id="DB14001">
    <property type="generic name" value="alpha-Tocopherol succinate"/>
</dbReference>
<dbReference type="SwissLipids" id="SLP:000000546"/>
<dbReference type="iPTMnet" id="P52429"/>
<dbReference type="PhosphoSitePlus" id="P52429"/>
<dbReference type="SwissPalm" id="P52429"/>
<dbReference type="BioMuta" id="DGKE"/>
<dbReference type="DMDM" id="1708625"/>
<dbReference type="jPOST" id="P52429"/>
<dbReference type="MassIVE" id="P52429"/>
<dbReference type="PaxDb" id="9606-ENSP00000284061"/>
<dbReference type="PeptideAtlas" id="P52429"/>
<dbReference type="ProteomicsDB" id="56484">
    <molecule id="P52429-1"/>
</dbReference>
<dbReference type="ProteomicsDB" id="74029"/>
<dbReference type="Pumba" id="P52429"/>
<dbReference type="Antibodypedia" id="2548">
    <property type="antibodies" value="237 antibodies from 30 providers"/>
</dbReference>
<dbReference type="DNASU" id="8526"/>
<dbReference type="Ensembl" id="ENST00000284061.8">
    <molecule id="P52429-1"/>
    <property type="protein sequence ID" value="ENSP00000284061.3"/>
    <property type="gene ID" value="ENSG00000153933.10"/>
</dbReference>
<dbReference type="Ensembl" id="ENST00000572810.1">
    <molecule id="P52429-2"/>
    <property type="protein sequence ID" value="ENSP00000459295.1"/>
    <property type="gene ID" value="ENSG00000153933.10"/>
</dbReference>
<dbReference type="GeneID" id="8526"/>
<dbReference type="KEGG" id="hsa:8526"/>
<dbReference type="MANE-Select" id="ENST00000284061.8">
    <property type="protein sequence ID" value="ENSP00000284061.3"/>
    <property type="RefSeq nucleotide sequence ID" value="NM_003647.3"/>
    <property type="RefSeq protein sequence ID" value="NP_003638.1"/>
</dbReference>
<dbReference type="UCSC" id="uc002iur.4">
    <molecule id="P52429-1"/>
    <property type="organism name" value="human"/>
</dbReference>
<dbReference type="AGR" id="HGNC:2852"/>
<dbReference type="CTD" id="8526"/>
<dbReference type="DisGeNET" id="8526"/>
<dbReference type="GeneCards" id="DGKE"/>
<dbReference type="GeneReviews" id="DGKE"/>
<dbReference type="HGNC" id="HGNC:2852">
    <property type="gene designation" value="DGKE"/>
</dbReference>
<dbReference type="HPA" id="ENSG00000153933">
    <property type="expression patterns" value="Tissue enhanced (retina)"/>
</dbReference>
<dbReference type="MalaCards" id="DGKE"/>
<dbReference type="MIM" id="601440">
    <property type="type" value="gene"/>
</dbReference>
<dbReference type="MIM" id="615008">
    <property type="type" value="phenotype"/>
</dbReference>
<dbReference type="neXtProt" id="NX_P52429"/>
<dbReference type="OpenTargets" id="ENSG00000153933"/>
<dbReference type="Orphanet" id="357008">
    <property type="disease" value="Hemolytic uremic syndrome with DGKE deficiency"/>
</dbReference>
<dbReference type="Orphanet" id="329903">
    <property type="disease" value="Immunoglobulin-mediated membranoproliferative glomerulonephritis"/>
</dbReference>
<dbReference type="PharmGKB" id="PA27313"/>
<dbReference type="VEuPathDB" id="HostDB:ENSG00000153933"/>
<dbReference type="eggNOG" id="KOG1169">
    <property type="taxonomic scope" value="Eukaryota"/>
</dbReference>
<dbReference type="GeneTree" id="ENSGT00940000158604"/>
<dbReference type="HOGENOM" id="CLU_1517427_0_0_1"/>
<dbReference type="InParanoid" id="P52429"/>
<dbReference type="OMA" id="MQPDCER"/>
<dbReference type="OrthoDB" id="242257at2759"/>
<dbReference type="PAN-GO" id="P52429">
    <property type="GO annotations" value="4 GO annotations based on evolutionary models"/>
</dbReference>
<dbReference type="PhylomeDB" id="P52429"/>
<dbReference type="TreeFam" id="TF313104"/>
<dbReference type="BRENDA" id="2.7.1.107">
    <property type="organism ID" value="2681"/>
</dbReference>
<dbReference type="PathwayCommons" id="P52429"/>
<dbReference type="Reactome" id="R-HSA-114508">
    <property type="pathway name" value="Effects of PIP2 hydrolysis"/>
</dbReference>
<dbReference type="SignaLink" id="P52429"/>
<dbReference type="UniPathway" id="UPA00230"/>
<dbReference type="BioGRID-ORCS" id="8526">
    <property type="hits" value="14 hits in 1164 CRISPR screens"/>
</dbReference>
<dbReference type="ChiTaRS" id="DGKE">
    <property type="organism name" value="human"/>
</dbReference>
<dbReference type="GenomeRNAi" id="8526"/>
<dbReference type="Pharos" id="P52429">
    <property type="development level" value="Tbio"/>
</dbReference>
<dbReference type="PRO" id="PR:P52429"/>
<dbReference type="Proteomes" id="UP000005640">
    <property type="component" value="Chromosome 17"/>
</dbReference>
<dbReference type="RNAct" id="P52429">
    <property type="molecule type" value="protein"/>
</dbReference>
<dbReference type="Bgee" id="ENSG00000153933">
    <property type="expression patterns" value="Expressed in Brodmann (1909) area 23 and 172 other cell types or tissues"/>
</dbReference>
<dbReference type="ExpressionAtlas" id="P52429">
    <property type="expression patterns" value="baseline and differential"/>
</dbReference>
<dbReference type="GO" id="GO:0005737">
    <property type="term" value="C:cytoplasm"/>
    <property type="evidence" value="ECO:0000314"/>
    <property type="project" value="UniProtKB"/>
</dbReference>
<dbReference type="GO" id="GO:0005829">
    <property type="term" value="C:cytosol"/>
    <property type="evidence" value="ECO:0000314"/>
    <property type="project" value="HPA"/>
</dbReference>
<dbReference type="GO" id="GO:0098978">
    <property type="term" value="C:glutamatergic synapse"/>
    <property type="evidence" value="ECO:0007669"/>
    <property type="project" value="Ensembl"/>
</dbReference>
<dbReference type="GO" id="GO:0016020">
    <property type="term" value="C:membrane"/>
    <property type="evidence" value="ECO:0000314"/>
    <property type="project" value="UniProtKB"/>
</dbReference>
<dbReference type="GO" id="GO:0005654">
    <property type="term" value="C:nucleoplasm"/>
    <property type="evidence" value="ECO:0000314"/>
    <property type="project" value="HPA"/>
</dbReference>
<dbReference type="GO" id="GO:0005886">
    <property type="term" value="C:plasma membrane"/>
    <property type="evidence" value="ECO:0000304"/>
    <property type="project" value="Reactome"/>
</dbReference>
<dbReference type="GO" id="GO:0005524">
    <property type="term" value="F:ATP binding"/>
    <property type="evidence" value="ECO:0007669"/>
    <property type="project" value="UniProtKB-KW"/>
</dbReference>
<dbReference type="GO" id="GO:0004143">
    <property type="term" value="F:ATP-dependent diacylglycerol kinase activity"/>
    <property type="evidence" value="ECO:0000314"/>
    <property type="project" value="UniProtKB"/>
</dbReference>
<dbReference type="GO" id="GO:0016301">
    <property type="term" value="F:kinase activity"/>
    <property type="evidence" value="ECO:0000314"/>
    <property type="project" value="BHF-UCL"/>
</dbReference>
<dbReference type="GO" id="GO:0008270">
    <property type="term" value="F:zinc ion binding"/>
    <property type="evidence" value="ECO:0007669"/>
    <property type="project" value="UniProtKB-KW"/>
</dbReference>
<dbReference type="GO" id="GO:0046339">
    <property type="term" value="P:diacylglycerol metabolic process"/>
    <property type="evidence" value="ECO:0000314"/>
    <property type="project" value="UniProtKB"/>
</dbReference>
<dbReference type="GO" id="GO:0046486">
    <property type="term" value="P:glycerolipid metabolic process"/>
    <property type="evidence" value="ECO:0000318"/>
    <property type="project" value="GO_Central"/>
</dbReference>
<dbReference type="GO" id="GO:0035556">
    <property type="term" value="P:intracellular signal transduction"/>
    <property type="evidence" value="ECO:0000318"/>
    <property type="project" value="GO_Central"/>
</dbReference>
<dbReference type="GO" id="GO:0046834">
    <property type="term" value="P:lipid phosphorylation"/>
    <property type="evidence" value="ECO:0000314"/>
    <property type="project" value="UniProtKB"/>
</dbReference>
<dbReference type="GO" id="GO:0050804">
    <property type="term" value="P:modulation of chemical synaptic transmission"/>
    <property type="evidence" value="ECO:0007669"/>
    <property type="project" value="Ensembl"/>
</dbReference>
<dbReference type="GO" id="GO:0006654">
    <property type="term" value="P:phosphatidic acid biosynthetic process"/>
    <property type="evidence" value="ECO:0000314"/>
    <property type="project" value="UniProtKB"/>
</dbReference>
<dbReference type="GO" id="GO:0006661">
    <property type="term" value="P:phosphatidylinositol biosynthetic process"/>
    <property type="evidence" value="ECO:0007669"/>
    <property type="project" value="Ensembl"/>
</dbReference>
<dbReference type="GO" id="GO:0007200">
    <property type="term" value="P:phospholipase C-activating G protein-coupled receptor signaling pathway"/>
    <property type="evidence" value="ECO:0007669"/>
    <property type="project" value="InterPro"/>
</dbReference>
<dbReference type="GO" id="GO:0030168">
    <property type="term" value="P:platelet activation"/>
    <property type="evidence" value="ECO:0000304"/>
    <property type="project" value="Reactome"/>
</dbReference>
<dbReference type="CDD" id="cd20801">
    <property type="entry name" value="C1_DGKepsilon_typeIII_rpt1"/>
    <property type="match status" value="1"/>
</dbReference>
<dbReference type="CDD" id="cd20853">
    <property type="entry name" value="C1_DGKepsilon_typeIII_rpt2"/>
    <property type="match status" value="1"/>
</dbReference>
<dbReference type="FunFam" id="2.60.200.40:FF:000005">
    <property type="entry name" value="Diacylglycerol kinase"/>
    <property type="match status" value="1"/>
</dbReference>
<dbReference type="FunFam" id="3.30.60.20:FF:000002">
    <property type="entry name" value="Diacylglycerol kinase"/>
    <property type="match status" value="1"/>
</dbReference>
<dbReference type="FunFam" id="3.40.50.10330:FF:000007">
    <property type="entry name" value="Diacylglycerol kinase"/>
    <property type="match status" value="1"/>
</dbReference>
<dbReference type="Gene3D" id="2.60.200.40">
    <property type="match status" value="1"/>
</dbReference>
<dbReference type="Gene3D" id="3.30.60.20">
    <property type="match status" value="1"/>
</dbReference>
<dbReference type="Gene3D" id="3.40.50.10330">
    <property type="entry name" value="Probable inorganic polyphosphate/atp-NAD kinase, domain 1"/>
    <property type="match status" value="1"/>
</dbReference>
<dbReference type="InterPro" id="IPR017438">
    <property type="entry name" value="ATP-NAD_kinase_N"/>
</dbReference>
<dbReference type="InterPro" id="IPR046349">
    <property type="entry name" value="C1-like_sf"/>
</dbReference>
<dbReference type="InterPro" id="IPR037607">
    <property type="entry name" value="DGK"/>
</dbReference>
<dbReference type="InterPro" id="IPR000756">
    <property type="entry name" value="Diacylglycerol_kin_accessory"/>
</dbReference>
<dbReference type="InterPro" id="IPR001206">
    <property type="entry name" value="Diacylglycerol_kinase_cat_dom"/>
</dbReference>
<dbReference type="InterPro" id="IPR016064">
    <property type="entry name" value="NAD/diacylglycerol_kinase_sf"/>
</dbReference>
<dbReference type="InterPro" id="IPR002219">
    <property type="entry name" value="PE/DAG-bd"/>
</dbReference>
<dbReference type="PANTHER" id="PTHR11255">
    <property type="entry name" value="DIACYLGLYCEROL KINASE"/>
    <property type="match status" value="1"/>
</dbReference>
<dbReference type="PANTHER" id="PTHR11255:SF118">
    <property type="entry name" value="DIACYLGLYCEROL KINASE EPSILON"/>
    <property type="match status" value="1"/>
</dbReference>
<dbReference type="Pfam" id="PF00130">
    <property type="entry name" value="C1_1"/>
    <property type="match status" value="1"/>
</dbReference>
<dbReference type="Pfam" id="PF00609">
    <property type="entry name" value="DAGK_acc"/>
    <property type="match status" value="1"/>
</dbReference>
<dbReference type="Pfam" id="PF00781">
    <property type="entry name" value="DAGK_cat"/>
    <property type="match status" value="1"/>
</dbReference>
<dbReference type="SMART" id="SM00109">
    <property type="entry name" value="C1"/>
    <property type="match status" value="2"/>
</dbReference>
<dbReference type="SMART" id="SM00045">
    <property type="entry name" value="DAGKa"/>
    <property type="match status" value="1"/>
</dbReference>
<dbReference type="SMART" id="SM00046">
    <property type="entry name" value="DAGKc"/>
    <property type="match status" value="1"/>
</dbReference>
<dbReference type="SUPFAM" id="SSF57889">
    <property type="entry name" value="Cysteine-rich domain"/>
    <property type="match status" value="2"/>
</dbReference>
<dbReference type="SUPFAM" id="SSF111331">
    <property type="entry name" value="NAD kinase/diacylglycerol kinase-like"/>
    <property type="match status" value="1"/>
</dbReference>
<dbReference type="PROSITE" id="PS50146">
    <property type="entry name" value="DAGK"/>
    <property type="match status" value="1"/>
</dbReference>
<dbReference type="PROSITE" id="PS00479">
    <property type="entry name" value="ZF_DAG_PE_1"/>
    <property type="match status" value="2"/>
</dbReference>
<dbReference type="PROSITE" id="PS50081">
    <property type="entry name" value="ZF_DAG_PE_2"/>
    <property type="match status" value="2"/>
</dbReference>
<feature type="chain" id="PRO_0000218464" description="Diacylglycerol kinase epsilon">
    <location>
        <begin position="1"/>
        <end position="567"/>
    </location>
</feature>
<feature type="transmembrane region" description="Helical" evidence="1">
    <location>
        <begin position="22"/>
        <end position="42"/>
    </location>
</feature>
<feature type="domain" description="DAGKc" evidence="3">
    <location>
        <begin position="215"/>
        <end position="356"/>
    </location>
</feature>
<feature type="zinc finger region" description="Phorbol-ester/DAG-type 1" evidence="2">
    <location>
        <begin position="59"/>
        <end position="108"/>
    </location>
</feature>
<feature type="zinc finger region" description="Phorbol-ester/DAG-type 2" evidence="2">
    <location>
        <begin position="124"/>
        <end position="177"/>
    </location>
</feature>
<feature type="splice variant" id="VSP_056957" description="In isoform 2." evidence="13">
    <original>CIWCQKTVHDECMKNSLKNEKC</original>
    <variation>YGLRGHSLSQNAPWESGFHRVV</variation>
    <location>
        <begin position="156"/>
        <end position="177"/>
    </location>
</feature>
<feature type="splice variant" id="VSP_056958" description="In isoform 2." evidence="13">
    <location>
        <begin position="178"/>
        <end position="567"/>
    </location>
</feature>
<feature type="sequence variant" id="VAR_069804" description="In AHUS7; dbSNP:rs312262694." evidence="11">
    <original>R</original>
    <variation>P</variation>
    <location>
        <position position="63"/>
    </location>
</feature>
<feature type="sequence variant" id="VAR_036120" description="In a breast cancer sample; somatic mutation." evidence="5">
    <original>L</original>
    <variation>R</variation>
    <location>
        <position position="99"/>
    </location>
</feature>
<feature type="sequence variant" id="VAR_069805" description="In AHUS7; dbSNP:rs312262695." evidence="11">
    <original>R</original>
    <variation>P</variation>
    <location>
        <position position="273"/>
    </location>
</feature>
<feature type="mutagenesis site" description="Decreased diacylglycerol kinase activity toward 1-octadecanoyl-2-(5Z,8Z,11Z,14Z-eicosatetraenoyl)-sn-glycerol." evidence="8">
    <original>L</original>
    <variation>I</variation>
    <location>
        <position position="431"/>
    </location>
</feature>
<feature type="mutagenesis site" description="Loss of diacylglycerol kinase activity toward 1-octadecanoyl-2-(5Z,8Z,11Z,14Z-eicosatetraenoyl)-sn-glycerol." evidence="8">
    <original>L</original>
    <variation>S</variation>
    <location>
        <position position="431"/>
    </location>
</feature>
<feature type="mutagenesis site" description="Decreased diacylglycerol kinase activity toward 1-octadecanoyl-2-(5Z,8Z,11Z,14Z-eicosatetraenoyl)-sn-glycerol." evidence="8">
    <original>L</original>
    <variation>I</variation>
    <location>
        <position position="438"/>
    </location>
</feature>
<feature type="mutagenesis site" description="Decreased protein abundance and diacylglycerol kinase activity toward 1-octadecanoyl-2-(5Z,8Z,11Z,14Z-eicosatetraenoyl)-sn-glycerol." evidence="8">
    <original>L</original>
    <variation>M</variation>
    <location>
        <position position="438"/>
    </location>
</feature>
<feature type="mutagenesis site" description="Loss of diacylglycerol kinase activity toward 1-octadecanoyl-2-(5Z,8Z,11Z,14Z-eicosatetraenoyl)-sn-glycerol." evidence="8">
    <original>L</original>
    <variation>S</variation>
    <variation>A</variation>
    <variation>G</variation>
    <location>
        <position position="438"/>
    </location>
</feature>
<feature type="mutagenesis site" description="Decreased diacylglycerol kinase activity toward 1-octadecanoyl-2-(5Z,8Z,11Z,14Z-eicosatetraenoyl)-sn-glycerol." evidence="8">
    <original>P</original>
    <variation>G</variation>
    <location>
        <position position="439"/>
    </location>
</feature>
<comment type="function">
    <text evidence="4 7 8 9 10 12 14 15">Membrane-bound diacylglycerol kinase that converts diacylglycerol/DAG into phosphatidic acid/phosphatidate/PA and regulates the respective levels of these two bioactive lipids (PubMed:15544348, PubMed:19744926, PubMed:21477596, PubMed:22108654, PubMed:23949095). Thereby, acts as a central switch between the signaling pathways activated by these second messengers with different cellular targets and opposite effects in numerous biological processes (PubMed:15544348, PubMed:8626589). Also plays an important role in the biosynthesis of complex lipids (PubMed:8626589). Displays specificity for diacylglycerol substrates with an arachidonoyl acyl chain at the sn-2 position, with the highest activity toward 1-octadecanoyl-2-(5Z,8Z,11Z,14Z-eicosatetraenoyl)-sn-glycerol the main diacylglycerol intermediate within the phosphatidylinositol turnover cycle (PubMed:19744926, PubMed:22108654, PubMed:23274426). Can also phosphorylate diacylglycerol substrates with a linoleoyl acyl chain at the sn-2 position but much less efficiently (PubMed:22108654).</text>
</comment>
<comment type="catalytic activity">
    <reaction evidence="4 6 7 8 9 12">
        <text>a 1,2-diacyl-sn-glycerol + ATP = a 1,2-diacyl-sn-glycero-3-phosphate + ADP + H(+)</text>
        <dbReference type="Rhea" id="RHEA:10272"/>
        <dbReference type="ChEBI" id="CHEBI:15378"/>
        <dbReference type="ChEBI" id="CHEBI:17815"/>
        <dbReference type="ChEBI" id="CHEBI:30616"/>
        <dbReference type="ChEBI" id="CHEBI:58608"/>
        <dbReference type="ChEBI" id="CHEBI:456216"/>
        <dbReference type="EC" id="2.7.1.107"/>
    </reaction>
    <physiologicalReaction direction="left-to-right" evidence="17">
        <dbReference type="Rhea" id="RHEA:10273"/>
    </physiologicalReaction>
</comment>
<comment type="catalytic activity">
    <reaction evidence="7">
        <text>1-hexadecanoyl-2-(5Z,8Z,11Z,14Z-eicosatetraenoyl)-sn-glycerol + ATP = 1-hexadecanoyl-2-(5Z,8Z,11Z,14Z-eicosatetraenoyl)-sn-glycero-3-phosphate + ADP + H(+)</text>
        <dbReference type="Rhea" id="RHEA:40335"/>
        <dbReference type="ChEBI" id="CHEBI:15378"/>
        <dbReference type="ChEBI" id="CHEBI:30616"/>
        <dbReference type="ChEBI" id="CHEBI:72864"/>
        <dbReference type="ChEBI" id="CHEBI:77096"/>
        <dbReference type="ChEBI" id="CHEBI:456216"/>
    </reaction>
    <physiologicalReaction direction="left-to-right" evidence="18">
        <dbReference type="Rhea" id="RHEA:40336"/>
    </physiologicalReaction>
</comment>
<comment type="catalytic activity">
    <reaction evidence="4 6 7 8 9 12">
        <text>1-octadecanoyl-2-(5Z,8Z,11Z,14Z-eicosatetraenoyl)-sn-glycerol + ATP = 1-octadecanoyl-2-(5Z,8Z,11Z,14Z-eicosatetraenoyl)-sn-glycero-3-phosphate + ADP + H(+)</text>
        <dbReference type="Rhea" id="RHEA:40323"/>
        <dbReference type="ChEBI" id="CHEBI:15378"/>
        <dbReference type="ChEBI" id="CHEBI:30616"/>
        <dbReference type="ChEBI" id="CHEBI:75728"/>
        <dbReference type="ChEBI" id="CHEBI:77091"/>
        <dbReference type="ChEBI" id="CHEBI:456216"/>
    </reaction>
    <physiologicalReaction direction="left-to-right" evidence="17">
        <dbReference type="Rhea" id="RHEA:40324"/>
    </physiologicalReaction>
</comment>
<comment type="catalytic activity">
    <reaction evidence="7">
        <text>1-eicosanoyl-2-(5Z,8Z,11Z,14Z)-eicosatetraenoyl-sn-glycerol + ATP = 1-eicosanoyl-2-(5Z,8Z,11Z,14Z)-eicosatetraenoyl-sn-glycero-3-phosphate + ADP + H(+)</text>
        <dbReference type="Rhea" id="RHEA:40331"/>
        <dbReference type="ChEBI" id="CHEBI:15378"/>
        <dbReference type="ChEBI" id="CHEBI:30616"/>
        <dbReference type="ChEBI" id="CHEBI:77094"/>
        <dbReference type="ChEBI" id="CHEBI:87223"/>
        <dbReference type="ChEBI" id="CHEBI:456216"/>
    </reaction>
    <physiologicalReaction direction="left-to-right" evidence="18">
        <dbReference type="Rhea" id="RHEA:40332"/>
    </physiologicalReaction>
</comment>
<comment type="catalytic activity">
    <reaction evidence="9">
        <text>1,2-di-(5Z,8Z,11Z,14Z)-eicosatetraenoyl-sn-glycerol + ATP = 1,2-di-(5Z,8Z,11Z,14Z)-eicosatetraenoyl-sn-glycero-3-phosphate + ADP + H(+)</text>
        <dbReference type="Rhea" id="RHEA:40351"/>
        <dbReference type="ChEBI" id="CHEBI:15378"/>
        <dbReference type="ChEBI" id="CHEBI:30616"/>
        <dbReference type="ChEBI" id="CHEBI:77125"/>
        <dbReference type="ChEBI" id="CHEBI:77126"/>
        <dbReference type="ChEBI" id="CHEBI:456216"/>
    </reaction>
    <physiologicalReaction direction="left-to-right" evidence="19">
        <dbReference type="Rhea" id="RHEA:40352"/>
    </physiologicalReaction>
</comment>
<comment type="catalytic activity">
    <reaction evidence="7 9">
        <text>1-octadecanoyl-2-(9Z,12Z)-octadecadienoyl-sn-glycerol + ATP = 1-octadecanoyl-2-(9Z,12Z-octadecadienoyl)-sn-glycero-3-phosphate + ADP + H(+)</text>
        <dbReference type="Rhea" id="RHEA:40339"/>
        <dbReference type="ChEBI" id="CHEBI:15378"/>
        <dbReference type="ChEBI" id="CHEBI:30616"/>
        <dbReference type="ChEBI" id="CHEBI:77097"/>
        <dbReference type="ChEBI" id="CHEBI:77098"/>
        <dbReference type="ChEBI" id="CHEBI:456216"/>
    </reaction>
    <physiologicalReaction direction="left-to-right" evidence="18">
        <dbReference type="Rhea" id="RHEA:40340"/>
    </physiologicalReaction>
</comment>
<comment type="catalytic activity">
    <reaction evidence="9">
        <text>1,2-di-(9Z,12Z-octadecadienoyl)-sn-glycerol + ATP = 1,2-di-(9Z,12Z-octadecadienoyl)-sn-glycero-3-phosphate + ADP + H(+)</text>
        <dbReference type="Rhea" id="RHEA:40355"/>
        <dbReference type="ChEBI" id="CHEBI:15378"/>
        <dbReference type="ChEBI" id="CHEBI:30616"/>
        <dbReference type="ChEBI" id="CHEBI:77127"/>
        <dbReference type="ChEBI" id="CHEBI:77128"/>
        <dbReference type="ChEBI" id="CHEBI:456216"/>
    </reaction>
    <physiologicalReaction direction="left-to-right" evidence="19">
        <dbReference type="Rhea" id="RHEA:40356"/>
    </physiologicalReaction>
</comment>
<comment type="catalytic activity">
    <reaction evidence="4 7">
        <text>1,2-di-(9Z-octadecenoyl)-sn-glycerol + ATP = 1,2-di-(9Z-octadecenoyl)-sn-glycero-3-phosphate + ADP + H(+)</text>
        <dbReference type="Rhea" id="RHEA:40327"/>
        <dbReference type="ChEBI" id="CHEBI:15378"/>
        <dbReference type="ChEBI" id="CHEBI:30616"/>
        <dbReference type="ChEBI" id="CHEBI:52333"/>
        <dbReference type="ChEBI" id="CHEBI:74546"/>
        <dbReference type="ChEBI" id="CHEBI:456216"/>
    </reaction>
    <physiologicalReaction direction="left-to-right" evidence="17">
        <dbReference type="Rhea" id="RHEA:40328"/>
    </physiologicalReaction>
</comment>
<comment type="activity regulation">
    <text evidence="7">Undergoes competitive inhibition by its own product 1,2-diacyl-sn-glycero-3-phosphate/phosphatidic acid. The strongest inhibition being observed in vitro with 1-octadecanoyl-2-(5Z,8Z,11Z,14Z-eicosatetraenoyl)-sn-glycero-3-phosphate, a major intermediate in the phosphatidylinositol turnover cycle and more generally by diacylglycerols with an arachidonoyl acyl chain at the sn-2 position.</text>
</comment>
<comment type="pathway">
    <text evidence="17">Lipid metabolism; glycerolipid metabolism.</text>
</comment>
<comment type="subcellular location">
    <subcellularLocation>
        <location evidence="11">Membrane</location>
        <topology evidence="1">Single-pass membrane protein</topology>
    </subcellularLocation>
    <subcellularLocation>
        <location evidence="11">Cytoplasm</location>
    </subcellularLocation>
</comment>
<comment type="alternative products">
    <event type="alternative splicing"/>
    <isoform>
        <id>P52429-1</id>
        <name>1</name>
        <sequence type="displayed"/>
    </isoform>
    <isoform>
        <id>P52429-2</id>
        <name>2</name>
        <sequence type="described" ref="VSP_056957 VSP_056958"/>
    </isoform>
</comment>
<comment type="tissue specificity">
    <text evidence="11">Expressed predominantly in testis. Expressed in endothelium, platelets and podocytes (at protein level).</text>
</comment>
<comment type="disease" evidence="10">
    <disease id="DI-03666">
        <name>Nephrotic syndrome 7</name>
        <acronym>NPHS7</acronym>
        <description>A form of nephrotic syndrome, a renal disease clinically characterized by severe proteinuria, resulting in complications such as hypoalbuminemia, hyperlipidemia and edema. NPHS7 is an autosomal recessive form characterized by onset of proteinuria usually in the first decade of life. The disorder is progressive, and some patients develop end-stage renal disease within several years. Renal biopsy typically shows membranoproliferative glomerulonephritis.</description>
        <dbReference type="MIM" id="615008"/>
    </disease>
    <text>The disease is caused by variants affecting the gene represented in this entry.</text>
</comment>
<comment type="disease" evidence="11">
    <disease id="DI-03798">
        <name>Hemolytic uremic syndrome, atypical, 7</name>
        <acronym>AHUS7</acronym>
        <description>An atypical form of hemolytic uremic syndrome characterized by acute onset in the first year of life of microangiopathic hemolytic anemia, thrombocytopenia, and renal failure. After the acute episode, most patients develop chronic renal insufficiency. Unlike other genetic forms of aHUS, AHUS7 is not related to abnormal activation of the complement system.</description>
        <dbReference type="MIM" id="615008"/>
    </disease>
    <text>Disease susceptibility is associated with variants affecting the gene represented in this entry.</text>
</comment>
<comment type="similarity">
    <text evidence="16">Belongs to the eukaryotic diacylglycerol kinase family.</text>
</comment>
<reference key="1">
    <citation type="journal article" date="1996" name="J. Biol. Chem.">
        <title>Molecular cloning of a novel human diacylglycerol kinase highly selective for arachidonate-containing substrates.</title>
        <authorList>
            <person name="Tang W."/>
            <person name="Bunting M."/>
            <person name="Zimmerman G.A."/>
            <person name="McIntyre T.M."/>
            <person name="Prescott S.M."/>
        </authorList>
    </citation>
    <scope>NUCLEOTIDE SEQUENCE [MRNA] (ISOFORM 1)</scope>
    <scope>FUNCTION</scope>
    <source>
        <tissue>Umbilical vein endothelial cell</tissue>
    </source>
</reference>
<reference key="2">
    <citation type="journal article" date="2006" name="Nature">
        <title>DNA sequence of human chromosome 17 and analysis of rearrangement in the human lineage.</title>
        <authorList>
            <person name="Zody M.C."/>
            <person name="Garber M."/>
            <person name="Adams D.J."/>
            <person name="Sharpe T."/>
            <person name="Harrow J."/>
            <person name="Lupski J.R."/>
            <person name="Nicholson C."/>
            <person name="Searle S.M."/>
            <person name="Wilming L."/>
            <person name="Young S.K."/>
            <person name="Abouelleil A."/>
            <person name="Allen N.R."/>
            <person name="Bi W."/>
            <person name="Bloom T."/>
            <person name="Borowsky M.L."/>
            <person name="Bugalter B.E."/>
            <person name="Butler J."/>
            <person name="Chang J.L."/>
            <person name="Chen C.-K."/>
            <person name="Cook A."/>
            <person name="Corum B."/>
            <person name="Cuomo C.A."/>
            <person name="de Jong P.J."/>
            <person name="DeCaprio D."/>
            <person name="Dewar K."/>
            <person name="FitzGerald M."/>
            <person name="Gilbert J."/>
            <person name="Gibson R."/>
            <person name="Gnerre S."/>
            <person name="Goldstein S."/>
            <person name="Grafham D.V."/>
            <person name="Grocock R."/>
            <person name="Hafez N."/>
            <person name="Hagopian D.S."/>
            <person name="Hart E."/>
            <person name="Norman C.H."/>
            <person name="Humphray S."/>
            <person name="Jaffe D.B."/>
            <person name="Jones M."/>
            <person name="Kamal M."/>
            <person name="Khodiyar V.K."/>
            <person name="LaButti K."/>
            <person name="Laird G."/>
            <person name="Lehoczky J."/>
            <person name="Liu X."/>
            <person name="Lokyitsang T."/>
            <person name="Loveland J."/>
            <person name="Lui A."/>
            <person name="Macdonald P."/>
            <person name="Major J.E."/>
            <person name="Matthews L."/>
            <person name="Mauceli E."/>
            <person name="McCarroll S.A."/>
            <person name="Mihalev A.H."/>
            <person name="Mudge J."/>
            <person name="Nguyen C."/>
            <person name="Nicol R."/>
            <person name="O'Leary S.B."/>
            <person name="Osoegawa K."/>
            <person name="Schwartz D.C."/>
            <person name="Shaw-Smith C."/>
            <person name="Stankiewicz P."/>
            <person name="Steward C."/>
            <person name="Swarbreck D."/>
            <person name="Venkataraman V."/>
            <person name="Whittaker C.A."/>
            <person name="Yang X."/>
            <person name="Zimmer A.R."/>
            <person name="Bradley A."/>
            <person name="Hubbard T."/>
            <person name="Birren B.W."/>
            <person name="Rogers J."/>
            <person name="Lander E.S."/>
            <person name="Nusbaum C."/>
        </authorList>
    </citation>
    <scope>NUCLEOTIDE SEQUENCE [LARGE SCALE GENOMIC DNA]</scope>
</reference>
<reference key="3">
    <citation type="journal article" date="2004" name="Genome Res.">
        <title>The status, quality, and expansion of the NIH full-length cDNA project: the Mammalian Gene Collection (MGC).</title>
        <authorList>
            <consortium name="The MGC Project Team"/>
        </authorList>
    </citation>
    <scope>NUCLEOTIDE SEQUENCE [LARGE SCALE MRNA] (ISOFORM 2)</scope>
    <source>
        <tissue>Prostate</tissue>
    </source>
</reference>
<reference key="4">
    <citation type="journal article" date="1999" name="Gene">
        <title>Characterization of the human diacylglycerol kinase epsilon gene and its assessment as a candidate for inherited retinitis pigmentosa.</title>
        <authorList>
            <person name="Tang W."/>
            <person name="Bardien S."/>
            <person name="Bhattacharya S.S."/>
            <person name="Prescott S.M."/>
        </authorList>
    </citation>
    <scope>NUCLEOTIDE SEQUENCE [GENOMIC DNA] OF 1-154</scope>
</reference>
<reference key="5">
    <citation type="journal article" date="2004" name="Biochemistry">
        <title>The alpha isoform of diacylglycerol kinase exhibits arachidonoyl specificity with alkylacylglycerol.</title>
        <authorList>
            <person name="Epand R.M."/>
            <person name="Kam A."/>
            <person name="Bridgelal N."/>
            <person name="Saiga A."/>
            <person name="Topham M.K."/>
        </authorList>
    </citation>
    <scope>FUNCTION</scope>
    <scope>CATALYTIC ACTIVITY</scope>
    <scope>SUBSTRATE SPECIFICITY</scope>
    <scope>PATHWAY</scope>
</reference>
<reference key="6">
    <citation type="journal article" date="2007" name="Biochemistry">
        <title>Substrate chirality and specificity of diacylglycerol kinases and the multisubstrate lipid kinase.</title>
        <authorList>
            <person name="Epand R.M."/>
            <person name="Shulga Y.V."/>
            <person name="Timmons H.C."/>
            <person name="Perri A.L."/>
            <person name="Belani J.D."/>
            <person name="Perinpanathan K."/>
            <person name="Johnson-McIntire L.B."/>
            <person name="Bajjalieh S."/>
            <person name="Dicu A.O."/>
            <person name="Elias C."/>
            <person name="Rychnovsky S.D."/>
            <person name="Topham M.K."/>
        </authorList>
    </citation>
    <scope>CATALYTIC ACTIVITY</scope>
</reference>
<reference key="7">
    <citation type="journal article" date="2009" name="J. Biol. Chem.">
        <title>Diacylglycerol kinase epsilon is selective for both acyl chains of phosphatidic acid or diacylglycerol.</title>
        <authorList>
            <person name="Lung M."/>
            <person name="Shulga Y.V."/>
            <person name="Ivanova P.T."/>
            <person name="Myers D.S."/>
            <person name="Milne S.B."/>
            <person name="Brown H.A."/>
            <person name="Topham M.K."/>
            <person name="Epand R.M."/>
        </authorList>
    </citation>
    <scope>FUNCTION</scope>
    <scope>CATALYTIC ACTIVITY</scope>
    <scope>SUBSTRATE SPECIFICITY</scope>
    <scope>ACTIVITY REGULATION</scope>
</reference>
<reference key="8">
    <citation type="journal article" date="2011" name="FEBS Lett.">
        <title>Substrate specificity of diacylglycerol kinase-epsilon and the phosphatidylinositol cycle.</title>
        <authorList>
            <person name="Shulga Y.V."/>
            <person name="Topham M.K."/>
            <person name="Epand R.M."/>
        </authorList>
    </citation>
    <scope>FUNCTION</scope>
    <scope>CATALYTIC ACTIVITY</scope>
    <scope>SUBSTRATE SPECIFICITY</scope>
</reference>
<reference key="9">
    <citation type="journal article" date="2011" name="J. Mol. Biol.">
        <title>Study of arachidonoyl specificity in two enzymes of the PI cycle.</title>
        <authorList>
            <person name="Shulga Y.V."/>
            <person name="Topham M.K."/>
            <person name="Epand R.M."/>
        </authorList>
    </citation>
    <scope>FUNCTION</scope>
    <scope>CATALYTIC ACTIVITY</scope>
    <scope>MUTAGENESIS OF LEU-431; LEU-438 AND PRO-439</scope>
</reference>
<reference key="10">
    <citation type="journal article" date="2013" name="Pharmacology">
        <title>Evaluations of the selectivities of the diacylglycerol kinase inhibitors R59022 and R59949 among diacylglycerol kinase isozymes using a new non-radioactive assay method.</title>
        <authorList>
            <person name="Sato M."/>
            <person name="Liu K."/>
            <person name="Sasaki S."/>
            <person name="Kunii N."/>
            <person name="Sakai H."/>
            <person name="Mizuno H."/>
            <person name="Saga H."/>
            <person name="Sakane F."/>
        </authorList>
    </citation>
    <scope>FUNCTION</scope>
    <scope>CATALYTIC ACTIVITY</scope>
</reference>
<reference key="11">
    <citation type="journal article" date="2013" name="J. Am. Soc. Nephrol.">
        <title>DGKE variants cause a glomerular microangiopathy that mimics membranoproliferative GN.</title>
        <authorList>
            <person name="Ozaltin F."/>
            <person name="Li B."/>
            <person name="Rauhauser A."/>
            <person name="An S.W."/>
            <person name="Soylemezoglu O."/>
            <person name="Gonul I.I."/>
            <person name="Taskiran E.Z."/>
            <person name="Ibsirlioglu T."/>
            <person name="Korkmaz E."/>
            <person name="Bilginer Y."/>
            <person name="Duzova A."/>
            <person name="Ozen S."/>
            <person name="Topaloglu R."/>
            <person name="Besbas N."/>
            <person name="Ashraf S."/>
            <person name="Du Y."/>
            <person name="Liang C."/>
            <person name="Chen P."/>
            <person name="Lu D."/>
            <person name="Vadnagara K."/>
            <person name="Arbuckle S."/>
            <person name="Lewis D."/>
            <person name="Wakeland B."/>
            <person name="Quigg R.J."/>
            <person name="Ransom R.F."/>
            <person name="Wakeland E.K."/>
            <person name="Topham M.K."/>
            <person name="Bazan N.G."/>
            <person name="Mohan C."/>
            <person name="Hildebrandt F."/>
            <person name="Bakkaloglu A."/>
            <person name="Huang C.L."/>
            <person name="Attanasio M."/>
        </authorList>
    </citation>
    <scope>INVOLVEMENT IN NPHS7</scope>
</reference>
<reference key="12">
    <citation type="journal article" date="2013" name="Nat. Genet.">
        <title>Recessive mutations in DGKE cause atypical hemolytic-uremic syndrome.</title>
        <authorList>
            <person name="Lemaire M."/>
            <person name="Fremeaux-Bacchi V."/>
            <person name="Schaefer F."/>
            <person name="Choi M."/>
            <person name="Tang W.H."/>
            <person name="Le Quintrec M."/>
            <person name="Fakhouri F."/>
            <person name="Taque S."/>
            <person name="Nobili F."/>
            <person name="Martinez F."/>
            <person name="Ji W."/>
            <person name="Overton J.D."/>
            <person name="Mane S.M."/>
            <person name="Nuernberg G."/>
            <person name="Altmueller J."/>
            <person name="Thiele H."/>
            <person name="Morin D."/>
            <person name="Deschenes G."/>
            <person name="Baudouin V."/>
            <person name="Llanas B."/>
            <person name="Collard L."/>
            <person name="Majid M.A."/>
            <person name="Simkova E."/>
            <person name="Nuernberg P."/>
            <person name="Rioux-Leclerc N."/>
            <person name="Moeckel G.W."/>
            <person name="Gubler M.C."/>
            <person name="Hwa J."/>
            <person name="Loirat C."/>
            <person name="Lifton R.P."/>
        </authorList>
    </citation>
    <scope>TISSUE SPECIFICITY</scope>
    <scope>SUBCELLULAR LOCATION</scope>
    <scope>VARIANTS AHUS7 PRO-63 AND PRO-273</scope>
</reference>
<reference key="13">
    <citation type="journal article" date="2006" name="Science">
        <title>The consensus coding sequences of human breast and colorectal cancers.</title>
        <authorList>
            <person name="Sjoeblom T."/>
            <person name="Jones S."/>
            <person name="Wood L.D."/>
            <person name="Parsons D.W."/>
            <person name="Lin J."/>
            <person name="Barber T.D."/>
            <person name="Mandelker D."/>
            <person name="Leary R.J."/>
            <person name="Ptak J."/>
            <person name="Silliman N."/>
            <person name="Szabo S."/>
            <person name="Buckhaults P."/>
            <person name="Farrell C."/>
            <person name="Meeh P."/>
            <person name="Markowitz S.D."/>
            <person name="Willis J."/>
            <person name="Dawson D."/>
            <person name="Willson J.K.V."/>
            <person name="Gazdar A.F."/>
            <person name="Hartigan J."/>
            <person name="Wu L."/>
            <person name="Liu C."/>
            <person name="Parmigiani G."/>
            <person name="Park B.H."/>
            <person name="Bachman K.E."/>
            <person name="Papadopoulos N."/>
            <person name="Vogelstein B."/>
            <person name="Kinzler K.W."/>
            <person name="Velculescu V.E."/>
        </authorList>
    </citation>
    <scope>VARIANT [LARGE SCALE ANALYSIS] ARG-99</scope>
</reference>
<keyword id="KW-0025">Alternative splicing</keyword>
<keyword id="KW-0067">ATP-binding</keyword>
<keyword id="KW-0963">Cytoplasm</keyword>
<keyword id="KW-0225">Disease variant</keyword>
<keyword id="KW-1068">Hemolytic uremic syndrome</keyword>
<keyword id="KW-0418">Kinase</keyword>
<keyword id="KW-0443">Lipid metabolism</keyword>
<keyword id="KW-0472">Membrane</keyword>
<keyword id="KW-0479">Metal-binding</keyword>
<keyword id="KW-0547">Nucleotide-binding</keyword>
<keyword id="KW-1267">Proteomics identification</keyword>
<keyword id="KW-1185">Reference proteome</keyword>
<keyword id="KW-0677">Repeat</keyword>
<keyword id="KW-0808">Transferase</keyword>
<keyword id="KW-0812">Transmembrane</keyword>
<keyword id="KW-1133">Transmembrane helix</keyword>
<keyword id="KW-0862">Zinc</keyword>
<keyword id="KW-0863">Zinc-finger</keyword>
<sequence>MEAERRPAPGSPSEGLFADGHLILWTLCSVLLPVFITFWCSLQRSRRQLHRRDIFRKSKHGWRDTDLFSQPTYCCVCAQHILQGAFCDCCGLRVDEGCLRKADKRFQCKEIMLKNDTKVLDAMPHHWIRGNVPLCSYCMVCKQQCGCQPKLCDYRCIWCQKTVHDECMKNSLKNEKCDFGEFKNLIIPPSYLTSINQMRKDKKTDYEVLASKLGKQWTPLIILANSRSGTNMGEGLLGEFRILLNPVQVFDVTKTPPIKALQLCTLLPYYSARVLVCGGDGTVGWVLDAVDDMKIKGQEKYIPQVAVLPLGTGNDLSNTLGWGTGYAGEIPVAQVLRNVMEADGIKLDRWKVQVTNKGYYNLRKPKEFTMNNYFSVGPDALMALNFHAHREKAPSLFSSRILNKAVYLFYGTKDCLVQECKDLNKKVELELDGERVALPSLEGIIVLNIGYWGGGCRLWEGMGDETYPLARHDDGLLEVVGVYGSFHCAQIQVKLANPFRIGQAHTVRLILKCSMMPMQVDGEPWAQGPCTVTITHKTHAMMLYFSGEQTDDDISSTSDQEDIKATE</sequence>
<protein>
    <recommendedName>
        <fullName>Diacylglycerol kinase epsilon</fullName>
        <shortName>DAG kinase epsilon</shortName>
        <ecNumber evidence="4 6 7 8 9 12">2.7.1.107</ecNumber>
    </recommendedName>
    <alternativeName>
        <fullName>Diglyceride kinase epsilon</fullName>
        <shortName>DGK-epsilon</shortName>
    </alternativeName>
</protein>
<proteinExistence type="evidence at protein level"/>
<name>DGKE_HUMAN</name>
<accession>P52429</accession>
<accession>Q8TBM4</accession>
<accession>Q9UKQ3</accession>